<sequence>MIETLLQSPSSWTNFFIFFGLAVLLLFAVLGFVTYGILAERKVMGFMQGRIGPNQVGGRFGLLQTVADVLKLLLKEDSIPKAADKPLFILAPVIAFAPAFMVLAVIPFTDKFQFADIGVGLLYYIAVSGITTIGVVTGGWASNNKYSLLGGMRAAAQMISYEIPLVMSVIGIVLLAGSLNLNEIVAAQENVWYIFVQPIGFVVFLIAAVAELNRTPFDLPEAESELVSGYHTEYSGFRWAFFMLSEYVYFFGMASLITVLFLGGWNPVMFLGFIPGAVWFALKFSSVVFLLIWFRVTFPRIRGDQLMEFGWKVLLPIALANIFLTALIKELFF</sequence>
<organism>
    <name type="scientific">Bacillus cereus (strain Q1)</name>
    <dbReference type="NCBI Taxonomy" id="361100"/>
    <lineage>
        <taxon>Bacteria</taxon>
        <taxon>Bacillati</taxon>
        <taxon>Bacillota</taxon>
        <taxon>Bacilli</taxon>
        <taxon>Bacillales</taxon>
        <taxon>Bacillaceae</taxon>
        <taxon>Bacillus</taxon>
        <taxon>Bacillus cereus group</taxon>
    </lineage>
</organism>
<name>NUOH_BACCQ</name>
<feature type="chain" id="PRO_1000166620" description="NADH-quinone oxidoreductase subunit H">
    <location>
        <begin position="1"/>
        <end position="333"/>
    </location>
</feature>
<feature type="transmembrane region" description="Helical" evidence="1">
    <location>
        <begin position="15"/>
        <end position="35"/>
    </location>
</feature>
<feature type="transmembrane region" description="Helical" evidence="1">
    <location>
        <begin position="88"/>
        <end position="108"/>
    </location>
</feature>
<feature type="transmembrane region" description="Helical" evidence="1">
    <location>
        <begin position="117"/>
        <end position="137"/>
    </location>
</feature>
<feature type="transmembrane region" description="Helical" evidence="1">
    <location>
        <begin position="159"/>
        <end position="179"/>
    </location>
</feature>
<feature type="transmembrane region" description="Helical" evidence="1">
    <location>
        <begin position="191"/>
        <end position="211"/>
    </location>
</feature>
<feature type="transmembrane region" description="Helical" evidence="1">
    <location>
        <begin position="239"/>
        <end position="259"/>
    </location>
</feature>
<feature type="transmembrane region" description="Helical" evidence="1">
    <location>
        <begin position="274"/>
        <end position="296"/>
    </location>
</feature>
<feature type="transmembrane region" description="Helical" evidence="1">
    <location>
        <begin position="313"/>
        <end position="333"/>
    </location>
</feature>
<accession>B9IRS8</accession>
<gene>
    <name evidence="1" type="primary">nuoH</name>
    <name type="ordered locus">BCQ_5136</name>
</gene>
<reference key="1">
    <citation type="journal article" date="2009" name="J. Bacteriol.">
        <title>Complete genome sequence of the extremophilic Bacillus cereus strain Q1 with industrial applications.</title>
        <authorList>
            <person name="Xiong Z."/>
            <person name="Jiang Y."/>
            <person name="Qi D."/>
            <person name="Lu H."/>
            <person name="Yang F."/>
            <person name="Yang J."/>
            <person name="Chen L."/>
            <person name="Sun L."/>
            <person name="Xu X."/>
            <person name="Xue Y."/>
            <person name="Zhu Y."/>
            <person name="Jin Q."/>
        </authorList>
    </citation>
    <scope>NUCLEOTIDE SEQUENCE [LARGE SCALE GENOMIC DNA]</scope>
    <source>
        <strain>Q1</strain>
    </source>
</reference>
<comment type="function">
    <text evidence="1">NDH-1 shuttles electrons from NADH, via FMN and iron-sulfur (Fe-S) centers, to quinones in the respiratory chain. The immediate electron acceptor for the enzyme in this species is believed to be ubiquinone. Couples the redox reaction to proton translocation (for every two electrons transferred, four hydrogen ions are translocated across the cytoplasmic membrane), and thus conserves the redox energy in a proton gradient. This subunit may bind ubiquinone.</text>
</comment>
<comment type="catalytic activity">
    <reaction evidence="1">
        <text>a quinone + NADH + 5 H(+)(in) = a quinol + NAD(+) + 4 H(+)(out)</text>
        <dbReference type="Rhea" id="RHEA:57888"/>
        <dbReference type="ChEBI" id="CHEBI:15378"/>
        <dbReference type="ChEBI" id="CHEBI:24646"/>
        <dbReference type="ChEBI" id="CHEBI:57540"/>
        <dbReference type="ChEBI" id="CHEBI:57945"/>
        <dbReference type="ChEBI" id="CHEBI:132124"/>
    </reaction>
</comment>
<comment type="subunit">
    <text evidence="1">NDH-1 is composed of 14 different subunits. Subunits NuoA, H, J, K, L, M, N constitute the membrane sector of the complex.</text>
</comment>
<comment type="subcellular location">
    <subcellularLocation>
        <location evidence="1">Cell membrane</location>
        <topology evidence="1">Multi-pass membrane protein</topology>
    </subcellularLocation>
</comment>
<comment type="similarity">
    <text evidence="1">Belongs to the complex I subunit 1 family.</text>
</comment>
<dbReference type="EC" id="7.1.1.-" evidence="1"/>
<dbReference type="EMBL" id="CP000227">
    <property type="protein sequence ID" value="ACM15536.1"/>
    <property type="molecule type" value="Genomic_DNA"/>
</dbReference>
<dbReference type="SMR" id="B9IRS8"/>
<dbReference type="KEGG" id="bcq:BCQ_5136"/>
<dbReference type="HOGENOM" id="CLU_015134_0_1_9"/>
<dbReference type="Proteomes" id="UP000000441">
    <property type="component" value="Chromosome"/>
</dbReference>
<dbReference type="GO" id="GO:0005886">
    <property type="term" value="C:plasma membrane"/>
    <property type="evidence" value="ECO:0007669"/>
    <property type="project" value="UniProtKB-SubCell"/>
</dbReference>
<dbReference type="GO" id="GO:0003954">
    <property type="term" value="F:NADH dehydrogenase activity"/>
    <property type="evidence" value="ECO:0007669"/>
    <property type="project" value="TreeGrafter"/>
</dbReference>
<dbReference type="GO" id="GO:0016655">
    <property type="term" value="F:oxidoreductase activity, acting on NAD(P)H, quinone or similar compound as acceptor"/>
    <property type="evidence" value="ECO:0007669"/>
    <property type="project" value="UniProtKB-UniRule"/>
</dbReference>
<dbReference type="GO" id="GO:0048038">
    <property type="term" value="F:quinone binding"/>
    <property type="evidence" value="ECO:0007669"/>
    <property type="project" value="UniProtKB-KW"/>
</dbReference>
<dbReference type="GO" id="GO:0009060">
    <property type="term" value="P:aerobic respiration"/>
    <property type="evidence" value="ECO:0007669"/>
    <property type="project" value="TreeGrafter"/>
</dbReference>
<dbReference type="HAMAP" id="MF_01350">
    <property type="entry name" value="NDH1_NuoH"/>
    <property type="match status" value="1"/>
</dbReference>
<dbReference type="InterPro" id="IPR001694">
    <property type="entry name" value="NADH_UbQ_OxRdtase_su1/FPO"/>
</dbReference>
<dbReference type="InterPro" id="IPR018086">
    <property type="entry name" value="NADH_UbQ_OxRdtase_su1_CS"/>
</dbReference>
<dbReference type="NCBIfam" id="NF004741">
    <property type="entry name" value="PRK06076.1-2"/>
    <property type="match status" value="1"/>
</dbReference>
<dbReference type="PANTHER" id="PTHR11432">
    <property type="entry name" value="NADH DEHYDROGENASE SUBUNIT 1"/>
    <property type="match status" value="1"/>
</dbReference>
<dbReference type="PANTHER" id="PTHR11432:SF3">
    <property type="entry name" value="NADH-UBIQUINONE OXIDOREDUCTASE CHAIN 1"/>
    <property type="match status" value="1"/>
</dbReference>
<dbReference type="Pfam" id="PF00146">
    <property type="entry name" value="NADHdh"/>
    <property type="match status" value="1"/>
</dbReference>
<dbReference type="PROSITE" id="PS00668">
    <property type="entry name" value="COMPLEX1_ND1_2"/>
    <property type="match status" value="1"/>
</dbReference>
<keyword id="KW-1003">Cell membrane</keyword>
<keyword id="KW-0472">Membrane</keyword>
<keyword id="KW-0520">NAD</keyword>
<keyword id="KW-0874">Quinone</keyword>
<keyword id="KW-1278">Translocase</keyword>
<keyword id="KW-0812">Transmembrane</keyword>
<keyword id="KW-1133">Transmembrane helix</keyword>
<keyword id="KW-0830">Ubiquinone</keyword>
<protein>
    <recommendedName>
        <fullName evidence="1">NADH-quinone oxidoreductase subunit H</fullName>
        <ecNumber evidence="1">7.1.1.-</ecNumber>
    </recommendedName>
    <alternativeName>
        <fullName evidence="1">NADH dehydrogenase I subunit H</fullName>
    </alternativeName>
    <alternativeName>
        <fullName evidence="1">NDH-1 subunit H</fullName>
    </alternativeName>
</protein>
<proteinExistence type="inferred from homology"/>
<evidence type="ECO:0000255" key="1">
    <source>
        <dbReference type="HAMAP-Rule" id="MF_01350"/>
    </source>
</evidence>